<proteinExistence type="predicted"/>
<reference key="1">
    <citation type="journal article" date="1998" name="Nature">
        <title>The genome sequence of Rickettsia prowazekii and the origin of mitochondria.</title>
        <authorList>
            <person name="Andersson S.G.E."/>
            <person name="Zomorodipour A."/>
            <person name="Andersson J.O."/>
            <person name="Sicheritz-Ponten T."/>
            <person name="Alsmark U.C.M."/>
            <person name="Podowski R.M."/>
            <person name="Naeslund A.K."/>
            <person name="Eriksson A.-S."/>
            <person name="Winkler H.H."/>
            <person name="Kurland C.G."/>
        </authorList>
    </citation>
    <scope>NUCLEOTIDE SEQUENCE [LARGE SCALE GENOMIC DNA]</scope>
    <source>
        <strain>Madrid E</strain>
    </source>
</reference>
<name>Y471_RICPR</name>
<keyword id="KW-1185">Reference proteome</keyword>
<protein>
    <recommendedName>
        <fullName>Uncharacterized protein RP471</fullName>
    </recommendedName>
</protein>
<feature type="chain" id="PRO_0000101377" description="Uncharacterized protein RP471">
    <location>
        <begin position="1"/>
        <end position="238"/>
    </location>
</feature>
<dbReference type="EMBL" id="AJ235271">
    <property type="protein sequence ID" value="CAA14926.1"/>
    <property type="molecule type" value="Genomic_DNA"/>
</dbReference>
<dbReference type="PIR" id="D71706">
    <property type="entry name" value="D71706"/>
</dbReference>
<dbReference type="RefSeq" id="NP_220850.1">
    <property type="nucleotide sequence ID" value="NC_000963.1"/>
</dbReference>
<dbReference type="RefSeq" id="WP_004597710.1">
    <property type="nucleotide sequence ID" value="NC_000963.1"/>
</dbReference>
<dbReference type="SMR" id="Q9ZD73"/>
<dbReference type="STRING" id="272947.gene:17555551"/>
<dbReference type="ESTHER" id="ricpr-y471">
    <property type="family name" value="Atu1826-like"/>
</dbReference>
<dbReference type="EnsemblBacteria" id="CAA14926">
    <property type="protein sequence ID" value="CAA14926"/>
    <property type="gene ID" value="CAA14926"/>
</dbReference>
<dbReference type="KEGG" id="rpr:RP471"/>
<dbReference type="PATRIC" id="fig|272947.5.peg.482"/>
<dbReference type="eggNOG" id="COG2945">
    <property type="taxonomic scope" value="Bacteria"/>
</dbReference>
<dbReference type="HOGENOM" id="CLU_086287_0_0_5"/>
<dbReference type="OrthoDB" id="9800435at2"/>
<dbReference type="Proteomes" id="UP000002480">
    <property type="component" value="Chromosome"/>
</dbReference>
<dbReference type="GO" id="GO:0016787">
    <property type="term" value="F:hydrolase activity"/>
    <property type="evidence" value="ECO:0007669"/>
    <property type="project" value="InterPro"/>
</dbReference>
<dbReference type="Gene3D" id="3.40.50.1820">
    <property type="entry name" value="alpha/beta hydrolase"/>
    <property type="match status" value="1"/>
</dbReference>
<dbReference type="InterPro" id="IPR029058">
    <property type="entry name" value="AB_hydrolase_fold"/>
</dbReference>
<dbReference type="InterPro" id="IPR000383">
    <property type="entry name" value="Xaa-Pro-like_dom"/>
</dbReference>
<dbReference type="PANTHER" id="PTHR42103:SF2">
    <property type="entry name" value="AB HYDROLASE-1 DOMAIN-CONTAINING PROTEIN"/>
    <property type="match status" value="1"/>
</dbReference>
<dbReference type="PANTHER" id="PTHR42103">
    <property type="entry name" value="ALPHA/BETA-HYDROLASES SUPERFAMILY PROTEIN"/>
    <property type="match status" value="1"/>
</dbReference>
<dbReference type="Pfam" id="PF02129">
    <property type="entry name" value="Peptidase_S15"/>
    <property type="match status" value="1"/>
</dbReference>
<dbReference type="SUPFAM" id="SSF53474">
    <property type="entry name" value="alpha/beta-Hydrolases"/>
    <property type="match status" value="1"/>
</dbReference>
<organism>
    <name type="scientific">Rickettsia prowazekii (strain Madrid E)</name>
    <dbReference type="NCBI Taxonomy" id="272947"/>
    <lineage>
        <taxon>Bacteria</taxon>
        <taxon>Pseudomonadati</taxon>
        <taxon>Pseudomonadota</taxon>
        <taxon>Alphaproteobacteria</taxon>
        <taxon>Rickettsiales</taxon>
        <taxon>Rickettsiaceae</taxon>
        <taxon>Rickettsieae</taxon>
        <taxon>Rickettsia</taxon>
        <taxon>typhus group</taxon>
    </lineage>
</organism>
<sequence length="238" mass="26882">MPQIYFNGPEGRIEGRYAKATSPNAPIALVLHPHPLYEGNMNNKVVYNAYKILVDNGYTVLRINFRGVGGSQGKFDNGVGEVVDAGAALDWLQQNNPNAQSNLILGFSFGAWIAMQLVMRRPEINHFLAISPPVNTIHKYDFSFLAPCPIPGFILQGDNDSIVSADDVKDLVNRLSNQQSHIKIDYKIINGADHFFRYKTEEFSKAINDYLITIQSNYHHHNNINEDKSKNQKKLFLY</sequence>
<gene>
    <name type="ordered locus">RP471</name>
</gene>
<accession>Q9ZD73</accession>